<evidence type="ECO:0000255" key="1">
    <source>
        <dbReference type="HAMAP-Rule" id="MF_00011"/>
    </source>
</evidence>
<organism>
    <name type="scientific">Desulforudis audaxviator (strain MP104C)</name>
    <dbReference type="NCBI Taxonomy" id="477974"/>
    <lineage>
        <taxon>Bacteria</taxon>
        <taxon>Bacillati</taxon>
        <taxon>Bacillota</taxon>
        <taxon>Clostridia</taxon>
        <taxon>Thermoanaerobacterales</taxon>
        <taxon>Candidatus Desulforudaceae</taxon>
        <taxon>Candidatus Desulforudis</taxon>
    </lineage>
</organism>
<reference key="1">
    <citation type="submission" date="2007-10" db="EMBL/GenBank/DDBJ databases">
        <title>Complete sequence of chromosome of Desulforudis audaxviator MP104C.</title>
        <authorList>
            <person name="Copeland A."/>
            <person name="Lucas S."/>
            <person name="Lapidus A."/>
            <person name="Barry K."/>
            <person name="Glavina del Rio T."/>
            <person name="Dalin E."/>
            <person name="Tice H."/>
            <person name="Bruce D."/>
            <person name="Pitluck S."/>
            <person name="Lowry S.R."/>
            <person name="Larimer F."/>
            <person name="Land M.L."/>
            <person name="Hauser L."/>
            <person name="Kyrpides N."/>
            <person name="Ivanova N.N."/>
            <person name="Richardson P."/>
        </authorList>
    </citation>
    <scope>NUCLEOTIDE SEQUENCE [LARGE SCALE GENOMIC DNA]</scope>
    <source>
        <strain>MP104C</strain>
    </source>
</reference>
<comment type="function">
    <text evidence="1">Plays an important role in the de novo pathway of purine nucleotide biosynthesis. Catalyzes the first committed step in the biosynthesis of AMP from IMP.</text>
</comment>
<comment type="catalytic activity">
    <reaction evidence="1">
        <text>IMP + L-aspartate + GTP = N(6)-(1,2-dicarboxyethyl)-AMP + GDP + phosphate + 2 H(+)</text>
        <dbReference type="Rhea" id="RHEA:15753"/>
        <dbReference type="ChEBI" id="CHEBI:15378"/>
        <dbReference type="ChEBI" id="CHEBI:29991"/>
        <dbReference type="ChEBI" id="CHEBI:37565"/>
        <dbReference type="ChEBI" id="CHEBI:43474"/>
        <dbReference type="ChEBI" id="CHEBI:57567"/>
        <dbReference type="ChEBI" id="CHEBI:58053"/>
        <dbReference type="ChEBI" id="CHEBI:58189"/>
        <dbReference type="EC" id="6.3.4.4"/>
    </reaction>
</comment>
<comment type="cofactor">
    <cofactor evidence="1">
        <name>Mg(2+)</name>
        <dbReference type="ChEBI" id="CHEBI:18420"/>
    </cofactor>
    <text evidence="1">Binds 1 Mg(2+) ion per subunit.</text>
</comment>
<comment type="pathway">
    <text evidence="1">Purine metabolism; AMP biosynthesis via de novo pathway; AMP from IMP: step 1/2.</text>
</comment>
<comment type="subunit">
    <text evidence="1">Homodimer.</text>
</comment>
<comment type="subcellular location">
    <subcellularLocation>
        <location evidence="1">Cytoplasm</location>
    </subcellularLocation>
</comment>
<comment type="similarity">
    <text evidence="1">Belongs to the adenylosuccinate synthetase family.</text>
</comment>
<proteinExistence type="inferred from homology"/>
<sequence>MSTVVLVGAQWGDEGKGKLTDYLAREADLVVRYQGGNNAGHTVVVEGQEFKLHLIPSGILHPDKVCVIGNGVVIDPGVLHRELEMLRAAGRPLAALYISERAHVIMPYHRQCDELEEDCPESLRRIGTTRRGIGPAYADKYAREGLRVVDLLEAGAEERLKLIIRRKGEILGRIHRAPAPDPERVAQEYLDHAEMLRPFVRDTSLLVHEAVRAGRNVLFEGAQGTLLDIDHGTYPYVTSSNPTAGGAAVGTGIGPRVIDTVIGVTKAYTTRVGDGPFPTELKDETGEHLRAAGREYGTTTGRPRRCGWLDTVITRYAARVNSLDYLAVTKLDVLTGLPVLRICRAYRYQGREIHDFPSRLSVLAGCEPVYEELPGWTEDLTGVRSFEELPAAARAYLDRLAELSGVPLGVVSVGPGREQTLPLADFFHRR</sequence>
<protein>
    <recommendedName>
        <fullName evidence="1">Adenylosuccinate synthetase</fullName>
        <shortName evidence="1">AMPSase</shortName>
        <shortName evidence="1">AdSS</shortName>
        <ecNumber evidence="1">6.3.4.4</ecNumber>
    </recommendedName>
    <alternativeName>
        <fullName evidence="1">IMP--aspartate ligase</fullName>
    </alternativeName>
</protein>
<dbReference type="EC" id="6.3.4.4" evidence="1"/>
<dbReference type="EMBL" id="CP000860">
    <property type="protein sequence ID" value="ACA60696.1"/>
    <property type="molecule type" value="Genomic_DNA"/>
</dbReference>
<dbReference type="RefSeq" id="WP_012303270.1">
    <property type="nucleotide sequence ID" value="NC_010424.1"/>
</dbReference>
<dbReference type="SMR" id="B1I6P8"/>
<dbReference type="STRING" id="477974.Daud_2209"/>
<dbReference type="KEGG" id="dau:Daud_2209"/>
<dbReference type="eggNOG" id="COG0104">
    <property type="taxonomic scope" value="Bacteria"/>
</dbReference>
<dbReference type="HOGENOM" id="CLU_029848_0_0_9"/>
<dbReference type="OrthoDB" id="9807553at2"/>
<dbReference type="UniPathway" id="UPA00075">
    <property type="reaction ID" value="UER00335"/>
</dbReference>
<dbReference type="Proteomes" id="UP000008544">
    <property type="component" value="Chromosome"/>
</dbReference>
<dbReference type="GO" id="GO:0005737">
    <property type="term" value="C:cytoplasm"/>
    <property type="evidence" value="ECO:0007669"/>
    <property type="project" value="UniProtKB-SubCell"/>
</dbReference>
<dbReference type="GO" id="GO:0004019">
    <property type="term" value="F:adenylosuccinate synthase activity"/>
    <property type="evidence" value="ECO:0007669"/>
    <property type="project" value="UniProtKB-UniRule"/>
</dbReference>
<dbReference type="GO" id="GO:0005525">
    <property type="term" value="F:GTP binding"/>
    <property type="evidence" value="ECO:0007669"/>
    <property type="project" value="UniProtKB-UniRule"/>
</dbReference>
<dbReference type="GO" id="GO:0000287">
    <property type="term" value="F:magnesium ion binding"/>
    <property type="evidence" value="ECO:0007669"/>
    <property type="project" value="UniProtKB-UniRule"/>
</dbReference>
<dbReference type="GO" id="GO:0044208">
    <property type="term" value="P:'de novo' AMP biosynthetic process"/>
    <property type="evidence" value="ECO:0007669"/>
    <property type="project" value="UniProtKB-UniRule"/>
</dbReference>
<dbReference type="GO" id="GO:0046040">
    <property type="term" value="P:IMP metabolic process"/>
    <property type="evidence" value="ECO:0007669"/>
    <property type="project" value="TreeGrafter"/>
</dbReference>
<dbReference type="CDD" id="cd03108">
    <property type="entry name" value="AdSS"/>
    <property type="match status" value="1"/>
</dbReference>
<dbReference type="FunFam" id="1.10.300.10:FF:000001">
    <property type="entry name" value="Adenylosuccinate synthetase"/>
    <property type="match status" value="1"/>
</dbReference>
<dbReference type="FunFam" id="3.90.170.10:FF:000001">
    <property type="entry name" value="Adenylosuccinate synthetase"/>
    <property type="match status" value="1"/>
</dbReference>
<dbReference type="Gene3D" id="3.40.440.10">
    <property type="entry name" value="Adenylosuccinate Synthetase, subunit A, domain 1"/>
    <property type="match status" value="1"/>
</dbReference>
<dbReference type="Gene3D" id="1.10.300.10">
    <property type="entry name" value="Adenylosuccinate Synthetase, subunit A, domain 2"/>
    <property type="match status" value="1"/>
</dbReference>
<dbReference type="Gene3D" id="3.90.170.10">
    <property type="entry name" value="Adenylosuccinate Synthetase, subunit A, domain 3"/>
    <property type="match status" value="1"/>
</dbReference>
<dbReference type="HAMAP" id="MF_00011">
    <property type="entry name" value="Adenylosucc_synth"/>
    <property type="match status" value="1"/>
</dbReference>
<dbReference type="InterPro" id="IPR018220">
    <property type="entry name" value="Adenylosuccin_syn_GTP-bd"/>
</dbReference>
<dbReference type="InterPro" id="IPR033128">
    <property type="entry name" value="Adenylosuccin_syn_Lys_AS"/>
</dbReference>
<dbReference type="InterPro" id="IPR042109">
    <property type="entry name" value="Adenylosuccinate_synth_dom1"/>
</dbReference>
<dbReference type="InterPro" id="IPR042110">
    <property type="entry name" value="Adenylosuccinate_synth_dom2"/>
</dbReference>
<dbReference type="InterPro" id="IPR042111">
    <property type="entry name" value="Adenylosuccinate_synth_dom3"/>
</dbReference>
<dbReference type="InterPro" id="IPR001114">
    <property type="entry name" value="Adenylosuccinate_synthetase"/>
</dbReference>
<dbReference type="InterPro" id="IPR027417">
    <property type="entry name" value="P-loop_NTPase"/>
</dbReference>
<dbReference type="NCBIfam" id="NF002223">
    <property type="entry name" value="PRK01117.1"/>
    <property type="match status" value="1"/>
</dbReference>
<dbReference type="NCBIfam" id="TIGR00184">
    <property type="entry name" value="purA"/>
    <property type="match status" value="1"/>
</dbReference>
<dbReference type="PANTHER" id="PTHR11846">
    <property type="entry name" value="ADENYLOSUCCINATE SYNTHETASE"/>
    <property type="match status" value="1"/>
</dbReference>
<dbReference type="PANTHER" id="PTHR11846:SF0">
    <property type="entry name" value="ADENYLOSUCCINATE SYNTHETASE"/>
    <property type="match status" value="1"/>
</dbReference>
<dbReference type="Pfam" id="PF00709">
    <property type="entry name" value="Adenylsucc_synt"/>
    <property type="match status" value="1"/>
</dbReference>
<dbReference type="SMART" id="SM00788">
    <property type="entry name" value="Adenylsucc_synt"/>
    <property type="match status" value="1"/>
</dbReference>
<dbReference type="SUPFAM" id="SSF52540">
    <property type="entry name" value="P-loop containing nucleoside triphosphate hydrolases"/>
    <property type="match status" value="1"/>
</dbReference>
<dbReference type="PROSITE" id="PS01266">
    <property type="entry name" value="ADENYLOSUCCIN_SYN_1"/>
    <property type="match status" value="1"/>
</dbReference>
<dbReference type="PROSITE" id="PS00513">
    <property type="entry name" value="ADENYLOSUCCIN_SYN_2"/>
    <property type="match status" value="1"/>
</dbReference>
<gene>
    <name evidence="1" type="primary">purA</name>
    <name type="ordered locus">Daud_2209</name>
</gene>
<feature type="chain" id="PRO_1000089287" description="Adenylosuccinate synthetase">
    <location>
        <begin position="1"/>
        <end position="430"/>
    </location>
</feature>
<feature type="active site" description="Proton acceptor" evidence="1">
    <location>
        <position position="13"/>
    </location>
</feature>
<feature type="active site" description="Proton donor" evidence="1">
    <location>
        <position position="41"/>
    </location>
</feature>
<feature type="binding site" evidence="1">
    <location>
        <begin position="12"/>
        <end position="18"/>
    </location>
    <ligand>
        <name>GTP</name>
        <dbReference type="ChEBI" id="CHEBI:37565"/>
    </ligand>
</feature>
<feature type="binding site" description="in other chain" evidence="1">
    <location>
        <begin position="13"/>
        <end position="16"/>
    </location>
    <ligand>
        <name>IMP</name>
        <dbReference type="ChEBI" id="CHEBI:58053"/>
        <note>ligand shared between dimeric partners</note>
    </ligand>
</feature>
<feature type="binding site" evidence="1">
    <location>
        <position position="13"/>
    </location>
    <ligand>
        <name>Mg(2+)</name>
        <dbReference type="ChEBI" id="CHEBI:18420"/>
    </ligand>
</feature>
<feature type="binding site" description="in other chain" evidence="1">
    <location>
        <begin position="38"/>
        <end position="41"/>
    </location>
    <ligand>
        <name>IMP</name>
        <dbReference type="ChEBI" id="CHEBI:58053"/>
        <note>ligand shared between dimeric partners</note>
    </ligand>
</feature>
<feature type="binding site" evidence="1">
    <location>
        <begin position="40"/>
        <end position="42"/>
    </location>
    <ligand>
        <name>GTP</name>
        <dbReference type="ChEBI" id="CHEBI:37565"/>
    </ligand>
</feature>
<feature type="binding site" evidence="1">
    <location>
        <position position="40"/>
    </location>
    <ligand>
        <name>Mg(2+)</name>
        <dbReference type="ChEBI" id="CHEBI:18420"/>
    </ligand>
</feature>
<feature type="binding site" description="in other chain" evidence="1">
    <location>
        <position position="129"/>
    </location>
    <ligand>
        <name>IMP</name>
        <dbReference type="ChEBI" id="CHEBI:58053"/>
        <note>ligand shared between dimeric partners</note>
    </ligand>
</feature>
<feature type="binding site" evidence="1">
    <location>
        <position position="143"/>
    </location>
    <ligand>
        <name>IMP</name>
        <dbReference type="ChEBI" id="CHEBI:58053"/>
        <note>ligand shared between dimeric partners</note>
    </ligand>
</feature>
<feature type="binding site" description="in other chain" evidence="1">
    <location>
        <position position="223"/>
    </location>
    <ligand>
        <name>IMP</name>
        <dbReference type="ChEBI" id="CHEBI:58053"/>
        <note>ligand shared between dimeric partners</note>
    </ligand>
</feature>
<feature type="binding site" description="in other chain" evidence="1">
    <location>
        <position position="238"/>
    </location>
    <ligand>
        <name>IMP</name>
        <dbReference type="ChEBI" id="CHEBI:58053"/>
        <note>ligand shared between dimeric partners</note>
    </ligand>
</feature>
<feature type="binding site" evidence="1">
    <location>
        <begin position="298"/>
        <end position="304"/>
    </location>
    <ligand>
        <name>substrate</name>
    </ligand>
</feature>
<feature type="binding site" description="in other chain" evidence="1">
    <location>
        <position position="302"/>
    </location>
    <ligand>
        <name>IMP</name>
        <dbReference type="ChEBI" id="CHEBI:58053"/>
        <note>ligand shared between dimeric partners</note>
    </ligand>
</feature>
<feature type="binding site" evidence="1">
    <location>
        <position position="304"/>
    </location>
    <ligand>
        <name>GTP</name>
        <dbReference type="ChEBI" id="CHEBI:37565"/>
    </ligand>
</feature>
<feature type="binding site" evidence="1">
    <location>
        <begin position="330"/>
        <end position="332"/>
    </location>
    <ligand>
        <name>GTP</name>
        <dbReference type="ChEBI" id="CHEBI:37565"/>
    </ligand>
</feature>
<feature type="binding site" evidence="1">
    <location>
        <begin position="412"/>
        <end position="414"/>
    </location>
    <ligand>
        <name>GTP</name>
        <dbReference type="ChEBI" id="CHEBI:37565"/>
    </ligand>
</feature>
<accession>B1I6P8</accession>
<keyword id="KW-0963">Cytoplasm</keyword>
<keyword id="KW-0342">GTP-binding</keyword>
<keyword id="KW-0436">Ligase</keyword>
<keyword id="KW-0460">Magnesium</keyword>
<keyword id="KW-0479">Metal-binding</keyword>
<keyword id="KW-0547">Nucleotide-binding</keyword>
<keyword id="KW-0658">Purine biosynthesis</keyword>
<keyword id="KW-1185">Reference proteome</keyword>
<name>PURA_DESAP</name>